<sequence length="300" mass="35016">MIQEGKLEQQFFDYLHSERNYSVNTSTAYENDLLDFRRFLNEQAITTYQQVTFLDVRIYLTELKQKSFSRTTVARKISSLRSFYTFLLRENVINENPFTYVSHAKNQLRLPKFFYSEEMEALFQVVYEDNETLTLRDRVLLEVLYGTGIRVSECAGILLPDLDTSYQAILIRGKGNKERYVPFGAYAEDAITDYLPERVNLMSRYKKSHDALLVNHYGDPLTTRGIRYCLTKIISKASLTRKIHPHMLRHTFATDLLNNGADMRTVQELLGHASLSSTQIYTHVTKEHLKSTYMKHHPRA</sequence>
<comment type="function">
    <text evidence="1">Site-specific tyrosine recombinase, which acts by catalyzing the cutting and rejoining of the recombining DNA molecules. The XerC-XerD complex is essential to convert dimers of the bacterial chromosome into monomers to permit their segregation at cell division. It also contributes to the segregational stability of plasmids.</text>
</comment>
<comment type="subunit">
    <text evidence="1">Forms a cyclic heterotetrameric complex composed of two molecules of XerC and two molecules of XerD.</text>
</comment>
<comment type="subcellular location">
    <subcellularLocation>
        <location evidence="1">Cytoplasm</location>
    </subcellularLocation>
</comment>
<comment type="similarity">
    <text evidence="1">Belongs to the 'phage' integrase family. XerC subfamily.</text>
</comment>
<protein>
    <recommendedName>
        <fullName evidence="1">Tyrosine recombinase XerC</fullName>
    </recommendedName>
</protein>
<feature type="chain" id="PRO_0000095304" description="Tyrosine recombinase XerC">
    <location>
        <begin position="1"/>
        <end position="300"/>
    </location>
</feature>
<feature type="domain" description="Core-binding (CB)" evidence="3">
    <location>
        <begin position="2"/>
        <end position="88"/>
    </location>
</feature>
<feature type="domain" description="Tyr recombinase" evidence="2">
    <location>
        <begin position="109"/>
        <end position="294"/>
    </location>
</feature>
<feature type="active site" evidence="1">
    <location>
        <position position="150"/>
    </location>
</feature>
<feature type="active site" evidence="1">
    <location>
        <position position="174"/>
    </location>
</feature>
<feature type="active site" evidence="1">
    <location>
        <position position="246"/>
    </location>
</feature>
<feature type="active site" evidence="1">
    <location>
        <position position="249"/>
    </location>
</feature>
<feature type="active site" evidence="1">
    <location>
        <position position="272"/>
    </location>
</feature>
<feature type="active site" description="O-(3'-phospho-DNA)-tyrosine intermediate" evidence="1">
    <location>
        <position position="281"/>
    </location>
</feature>
<keyword id="KW-0131">Cell cycle</keyword>
<keyword id="KW-0132">Cell division</keyword>
<keyword id="KW-0159">Chromosome partition</keyword>
<keyword id="KW-0963">Cytoplasm</keyword>
<keyword id="KW-0229">DNA integration</keyword>
<keyword id="KW-0233">DNA recombination</keyword>
<keyword id="KW-0238">DNA-binding</keyword>
<keyword id="KW-1185">Reference proteome</keyword>
<gene>
    <name evidence="1" type="primary">xerC</name>
    <name type="synonym">codV</name>
    <name type="ordered locus">lmo1277</name>
</gene>
<accession>Q8Y7K0</accession>
<organism>
    <name type="scientific">Listeria monocytogenes serovar 1/2a (strain ATCC BAA-679 / EGD-e)</name>
    <dbReference type="NCBI Taxonomy" id="169963"/>
    <lineage>
        <taxon>Bacteria</taxon>
        <taxon>Bacillati</taxon>
        <taxon>Bacillota</taxon>
        <taxon>Bacilli</taxon>
        <taxon>Bacillales</taxon>
        <taxon>Listeriaceae</taxon>
        <taxon>Listeria</taxon>
    </lineage>
</organism>
<reference key="1">
    <citation type="journal article" date="2001" name="Science">
        <title>Comparative genomics of Listeria species.</title>
        <authorList>
            <person name="Glaser P."/>
            <person name="Frangeul L."/>
            <person name="Buchrieser C."/>
            <person name="Rusniok C."/>
            <person name="Amend A."/>
            <person name="Baquero F."/>
            <person name="Berche P."/>
            <person name="Bloecker H."/>
            <person name="Brandt P."/>
            <person name="Chakraborty T."/>
            <person name="Charbit A."/>
            <person name="Chetouani F."/>
            <person name="Couve E."/>
            <person name="de Daruvar A."/>
            <person name="Dehoux P."/>
            <person name="Domann E."/>
            <person name="Dominguez-Bernal G."/>
            <person name="Duchaud E."/>
            <person name="Durant L."/>
            <person name="Dussurget O."/>
            <person name="Entian K.-D."/>
            <person name="Fsihi H."/>
            <person name="Garcia-del Portillo F."/>
            <person name="Garrido P."/>
            <person name="Gautier L."/>
            <person name="Goebel W."/>
            <person name="Gomez-Lopez N."/>
            <person name="Hain T."/>
            <person name="Hauf J."/>
            <person name="Jackson D."/>
            <person name="Jones L.-M."/>
            <person name="Kaerst U."/>
            <person name="Kreft J."/>
            <person name="Kuhn M."/>
            <person name="Kunst F."/>
            <person name="Kurapkat G."/>
            <person name="Madueno E."/>
            <person name="Maitournam A."/>
            <person name="Mata Vicente J."/>
            <person name="Ng E."/>
            <person name="Nedjari H."/>
            <person name="Nordsiek G."/>
            <person name="Novella S."/>
            <person name="de Pablos B."/>
            <person name="Perez-Diaz J.-C."/>
            <person name="Purcell R."/>
            <person name="Remmel B."/>
            <person name="Rose M."/>
            <person name="Schlueter T."/>
            <person name="Simoes N."/>
            <person name="Tierrez A."/>
            <person name="Vazquez-Boland J.-A."/>
            <person name="Voss H."/>
            <person name="Wehland J."/>
            <person name="Cossart P."/>
        </authorList>
    </citation>
    <scope>NUCLEOTIDE SEQUENCE [LARGE SCALE GENOMIC DNA]</scope>
    <source>
        <strain>ATCC BAA-679 / EGD-e</strain>
    </source>
</reference>
<name>XERC_LISMO</name>
<dbReference type="EMBL" id="AL591978">
    <property type="protein sequence ID" value="CAC99355.1"/>
    <property type="molecule type" value="Genomic_DNA"/>
</dbReference>
<dbReference type="PIR" id="AE1234">
    <property type="entry name" value="AE1234"/>
</dbReference>
<dbReference type="RefSeq" id="NP_464802.1">
    <property type="nucleotide sequence ID" value="NC_003210.1"/>
</dbReference>
<dbReference type="RefSeq" id="WP_009911635.1">
    <property type="nucleotide sequence ID" value="NZ_CP149495.1"/>
</dbReference>
<dbReference type="SMR" id="Q8Y7K0"/>
<dbReference type="STRING" id="169963.gene:17593934"/>
<dbReference type="PaxDb" id="169963-lmo1277"/>
<dbReference type="EnsemblBacteria" id="CAC99355">
    <property type="protein sequence ID" value="CAC99355"/>
    <property type="gene ID" value="CAC99355"/>
</dbReference>
<dbReference type="GeneID" id="985098"/>
<dbReference type="KEGG" id="lmo:lmo1277"/>
<dbReference type="PATRIC" id="fig|169963.11.peg.1312"/>
<dbReference type="eggNOG" id="COG4974">
    <property type="taxonomic scope" value="Bacteria"/>
</dbReference>
<dbReference type="HOGENOM" id="CLU_027562_9_0_9"/>
<dbReference type="OrthoDB" id="9801717at2"/>
<dbReference type="PhylomeDB" id="Q8Y7K0"/>
<dbReference type="BioCyc" id="LMON169963:LMO1277-MONOMER"/>
<dbReference type="Proteomes" id="UP000000817">
    <property type="component" value="Chromosome"/>
</dbReference>
<dbReference type="GO" id="GO:0005737">
    <property type="term" value="C:cytoplasm"/>
    <property type="evidence" value="ECO:0007669"/>
    <property type="project" value="UniProtKB-SubCell"/>
</dbReference>
<dbReference type="GO" id="GO:0003677">
    <property type="term" value="F:DNA binding"/>
    <property type="evidence" value="ECO:0007669"/>
    <property type="project" value="UniProtKB-KW"/>
</dbReference>
<dbReference type="GO" id="GO:0009009">
    <property type="term" value="F:site-specific recombinase activity"/>
    <property type="evidence" value="ECO:0000318"/>
    <property type="project" value="GO_Central"/>
</dbReference>
<dbReference type="GO" id="GO:0009037">
    <property type="term" value="F:tyrosine-based site-specific recombinase activity"/>
    <property type="evidence" value="ECO:0007669"/>
    <property type="project" value="UniProtKB-UniRule"/>
</dbReference>
<dbReference type="GO" id="GO:0051301">
    <property type="term" value="P:cell division"/>
    <property type="evidence" value="ECO:0007669"/>
    <property type="project" value="UniProtKB-KW"/>
</dbReference>
<dbReference type="GO" id="GO:0007059">
    <property type="term" value="P:chromosome segregation"/>
    <property type="evidence" value="ECO:0000318"/>
    <property type="project" value="GO_Central"/>
</dbReference>
<dbReference type="GO" id="GO:0006310">
    <property type="term" value="P:DNA recombination"/>
    <property type="evidence" value="ECO:0000318"/>
    <property type="project" value="GO_Central"/>
</dbReference>
<dbReference type="GO" id="GO:0006313">
    <property type="term" value="P:DNA transposition"/>
    <property type="evidence" value="ECO:0007669"/>
    <property type="project" value="UniProtKB-UniRule"/>
</dbReference>
<dbReference type="CDD" id="cd00798">
    <property type="entry name" value="INT_XerDC_C"/>
    <property type="match status" value="1"/>
</dbReference>
<dbReference type="Gene3D" id="1.10.150.130">
    <property type="match status" value="1"/>
</dbReference>
<dbReference type="Gene3D" id="1.10.443.10">
    <property type="entry name" value="Intergrase catalytic core"/>
    <property type="match status" value="1"/>
</dbReference>
<dbReference type="HAMAP" id="MF_01808">
    <property type="entry name" value="Recomb_XerC_XerD"/>
    <property type="match status" value="1"/>
</dbReference>
<dbReference type="InterPro" id="IPR044068">
    <property type="entry name" value="CB"/>
</dbReference>
<dbReference type="InterPro" id="IPR011010">
    <property type="entry name" value="DNA_brk_join_enz"/>
</dbReference>
<dbReference type="InterPro" id="IPR013762">
    <property type="entry name" value="Integrase-like_cat_sf"/>
</dbReference>
<dbReference type="InterPro" id="IPR002104">
    <property type="entry name" value="Integrase_catalytic"/>
</dbReference>
<dbReference type="InterPro" id="IPR010998">
    <property type="entry name" value="Integrase_recombinase_N"/>
</dbReference>
<dbReference type="InterPro" id="IPR004107">
    <property type="entry name" value="Integrase_SAM-like_N"/>
</dbReference>
<dbReference type="InterPro" id="IPR011931">
    <property type="entry name" value="Recomb_XerC"/>
</dbReference>
<dbReference type="InterPro" id="IPR023009">
    <property type="entry name" value="Tyrosine_recombinase_XerC/XerD"/>
</dbReference>
<dbReference type="InterPro" id="IPR050090">
    <property type="entry name" value="Tyrosine_recombinase_XerCD"/>
</dbReference>
<dbReference type="NCBIfam" id="NF001399">
    <property type="entry name" value="PRK00283.1"/>
    <property type="match status" value="1"/>
</dbReference>
<dbReference type="NCBIfam" id="TIGR02224">
    <property type="entry name" value="recomb_XerC"/>
    <property type="match status" value="1"/>
</dbReference>
<dbReference type="PANTHER" id="PTHR30349">
    <property type="entry name" value="PHAGE INTEGRASE-RELATED"/>
    <property type="match status" value="1"/>
</dbReference>
<dbReference type="PANTHER" id="PTHR30349:SF77">
    <property type="entry name" value="TYROSINE RECOMBINASE XERC"/>
    <property type="match status" value="1"/>
</dbReference>
<dbReference type="Pfam" id="PF02899">
    <property type="entry name" value="Phage_int_SAM_1"/>
    <property type="match status" value="1"/>
</dbReference>
<dbReference type="Pfam" id="PF00589">
    <property type="entry name" value="Phage_integrase"/>
    <property type="match status" value="1"/>
</dbReference>
<dbReference type="SUPFAM" id="SSF56349">
    <property type="entry name" value="DNA breaking-rejoining enzymes"/>
    <property type="match status" value="1"/>
</dbReference>
<dbReference type="PROSITE" id="PS51900">
    <property type="entry name" value="CB"/>
    <property type="match status" value="1"/>
</dbReference>
<dbReference type="PROSITE" id="PS51898">
    <property type="entry name" value="TYR_RECOMBINASE"/>
    <property type="match status" value="1"/>
</dbReference>
<proteinExistence type="inferred from homology"/>
<evidence type="ECO:0000255" key="1">
    <source>
        <dbReference type="HAMAP-Rule" id="MF_01808"/>
    </source>
</evidence>
<evidence type="ECO:0000255" key="2">
    <source>
        <dbReference type="PROSITE-ProRule" id="PRU01246"/>
    </source>
</evidence>
<evidence type="ECO:0000255" key="3">
    <source>
        <dbReference type="PROSITE-ProRule" id="PRU01248"/>
    </source>
</evidence>